<protein>
    <recommendedName>
        <fullName evidence="1">Fluoride-specific ion channel FluC</fullName>
    </recommendedName>
</protein>
<feature type="chain" id="PRO_1000026387" description="Fluoride-specific ion channel FluC">
    <location>
        <begin position="1"/>
        <end position="130"/>
    </location>
</feature>
<feature type="transmembrane region" description="Helical" evidence="1">
    <location>
        <begin position="2"/>
        <end position="22"/>
    </location>
</feature>
<feature type="transmembrane region" description="Helical" evidence="1">
    <location>
        <begin position="36"/>
        <end position="56"/>
    </location>
</feature>
<feature type="transmembrane region" description="Helical" evidence="1">
    <location>
        <begin position="71"/>
        <end position="91"/>
    </location>
</feature>
<feature type="transmembrane region" description="Helical" evidence="1">
    <location>
        <begin position="100"/>
        <end position="120"/>
    </location>
</feature>
<feature type="binding site" evidence="1">
    <location>
        <position position="79"/>
    </location>
    <ligand>
        <name>Na(+)</name>
        <dbReference type="ChEBI" id="CHEBI:29101"/>
        <note>structural</note>
    </ligand>
</feature>
<feature type="binding site" evidence="1">
    <location>
        <position position="82"/>
    </location>
    <ligand>
        <name>Na(+)</name>
        <dbReference type="ChEBI" id="CHEBI:29101"/>
        <note>structural</note>
    </ligand>
</feature>
<reference key="1">
    <citation type="journal article" date="2007" name="PLoS ONE">
        <title>Genome sequencing shows that European isolates of Francisella tularensis subspecies tularensis are almost identical to US laboratory strain Schu S4.</title>
        <authorList>
            <person name="Chaudhuri R.R."/>
            <person name="Ren C.-P."/>
            <person name="Desmond L."/>
            <person name="Vincent G.A."/>
            <person name="Silman N.J."/>
            <person name="Brehm J.K."/>
            <person name="Elmore M.J."/>
            <person name="Hudson M.J."/>
            <person name="Forsman M."/>
            <person name="Isherwood K.E."/>
            <person name="Gurycova D."/>
            <person name="Minton N.P."/>
            <person name="Titball R.W."/>
            <person name="Pallen M.J."/>
            <person name="Vipond R."/>
        </authorList>
    </citation>
    <scope>NUCLEOTIDE SEQUENCE [LARGE SCALE GENOMIC DNA]</scope>
    <source>
        <strain>FSC 198</strain>
    </source>
</reference>
<accession>Q14JI2</accession>
<gene>
    <name evidence="1" type="primary">fluC</name>
    <name evidence="1" type="synonym">crcB</name>
    <name type="ordered locus">FTF0260</name>
</gene>
<comment type="function">
    <text evidence="1">Fluoride-specific ion channel. Important for reducing fluoride concentration in the cell, thus reducing its toxicity.</text>
</comment>
<comment type="catalytic activity">
    <reaction evidence="1">
        <text>fluoride(in) = fluoride(out)</text>
        <dbReference type="Rhea" id="RHEA:76159"/>
        <dbReference type="ChEBI" id="CHEBI:17051"/>
    </reaction>
    <physiologicalReaction direction="left-to-right" evidence="1">
        <dbReference type="Rhea" id="RHEA:76160"/>
    </physiologicalReaction>
</comment>
<comment type="activity regulation">
    <text evidence="1">Na(+) is not transported, but it plays an essential structural role and its presence is essential for fluoride channel function.</text>
</comment>
<comment type="subcellular location">
    <subcellularLocation>
        <location evidence="1">Cell inner membrane</location>
        <topology evidence="1">Multi-pass membrane protein</topology>
    </subcellularLocation>
</comment>
<comment type="similarity">
    <text evidence="1">Belongs to the fluoride channel Fluc/FEX (TC 1.A.43) family.</text>
</comment>
<evidence type="ECO:0000255" key="1">
    <source>
        <dbReference type="HAMAP-Rule" id="MF_00454"/>
    </source>
</evidence>
<proteinExistence type="inferred from homology"/>
<name>FLUC_FRAT1</name>
<dbReference type="EMBL" id="AM286280">
    <property type="protein sequence ID" value="CAL08276.1"/>
    <property type="molecule type" value="Genomic_DNA"/>
</dbReference>
<dbReference type="RefSeq" id="WP_003021730.1">
    <property type="nucleotide sequence ID" value="NC_008245.1"/>
</dbReference>
<dbReference type="SMR" id="Q14JI2"/>
<dbReference type="KEGG" id="ftf:FTF0260"/>
<dbReference type="HOGENOM" id="CLU_114342_2_3_6"/>
<dbReference type="GO" id="GO:0005886">
    <property type="term" value="C:plasma membrane"/>
    <property type="evidence" value="ECO:0007669"/>
    <property type="project" value="UniProtKB-SubCell"/>
</dbReference>
<dbReference type="GO" id="GO:0062054">
    <property type="term" value="F:fluoride channel activity"/>
    <property type="evidence" value="ECO:0007669"/>
    <property type="project" value="UniProtKB-UniRule"/>
</dbReference>
<dbReference type="GO" id="GO:0046872">
    <property type="term" value="F:metal ion binding"/>
    <property type="evidence" value="ECO:0007669"/>
    <property type="project" value="UniProtKB-KW"/>
</dbReference>
<dbReference type="GO" id="GO:0140114">
    <property type="term" value="P:cellular detoxification of fluoride"/>
    <property type="evidence" value="ECO:0007669"/>
    <property type="project" value="UniProtKB-UniRule"/>
</dbReference>
<dbReference type="HAMAP" id="MF_00454">
    <property type="entry name" value="FluC"/>
    <property type="match status" value="1"/>
</dbReference>
<dbReference type="InterPro" id="IPR003691">
    <property type="entry name" value="FluC"/>
</dbReference>
<dbReference type="NCBIfam" id="TIGR00494">
    <property type="entry name" value="crcB"/>
    <property type="match status" value="1"/>
</dbReference>
<dbReference type="PANTHER" id="PTHR28259">
    <property type="entry name" value="FLUORIDE EXPORT PROTEIN 1-RELATED"/>
    <property type="match status" value="1"/>
</dbReference>
<dbReference type="PANTHER" id="PTHR28259:SF1">
    <property type="entry name" value="FLUORIDE EXPORT PROTEIN 1-RELATED"/>
    <property type="match status" value="1"/>
</dbReference>
<dbReference type="Pfam" id="PF02537">
    <property type="entry name" value="CRCB"/>
    <property type="match status" value="1"/>
</dbReference>
<keyword id="KW-0997">Cell inner membrane</keyword>
<keyword id="KW-1003">Cell membrane</keyword>
<keyword id="KW-0407">Ion channel</keyword>
<keyword id="KW-0406">Ion transport</keyword>
<keyword id="KW-0472">Membrane</keyword>
<keyword id="KW-0479">Metal-binding</keyword>
<keyword id="KW-0915">Sodium</keyword>
<keyword id="KW-0812">Transmembrane</keyword>
<keyword id="KW-1133">Transmembrane helix</keyword>
<keyword id="KW-0813">Transport</keyword>
<sequence>MGLLLLLVGIGGGFGAMARFALTQATASISKQIPLGILLCNIIGSLIIGMMAAFLIETKLFNEDVSTYVRFLLVTGFLGGFTTFSSFSLDILNLLQRGEIFIAIGYIMVSVLASLIAVILGFYIVMGVYK</sequence>
<organism>
    <name type="scientific">Francisella tularensis subsp. tularensis (strain FSC 198)</name>
    <dbReference type="NCBI Taxonomy" id="393115"/>
    <lineage>
        <taxon>Bacteria</taxon>
        <taxon>Pseudomonadati</taxon>
        <taxon>Pseudomonadota</taxon>
        <taxon>Gammaproteobacteria</taxon>
        <taxon>Thiotrichales</taxon>
        <taxon>Francisellaceae</taxon>
        <taxon>Francisella</taxon>
    </lineage>
</organism>